<reference key="1">
    <citation type="journal article" date="2006" name="J. Bacteriol.">
        <title>The genome sequence of Methanosphaera stadtmanae reveals why this human intestinal archaeon is restricted to methanol and H2 for methane formation and ATP synthesis.</title>
        <authorList>
            <person name="Fricke W.F."/>
            <person name="Seedorf H."/>
            <person name="Henne A."/>
            <person name="Kruer M."/>
            <person name="Liesegang H."/>
            <person name="Hedderich R."/>
            <person name="Gottschalk G."/>
            <person name="Thauer R.K."/>
        </authorList>
    </citation>
    <scope>NUCLEOTIDE SEQUENCE [LARGE SCALE GENOMIC DNA]</scope>
    <source>
        <strain>ATCC 43021 / DSM 3091 / JCM 11832 / MCB-3</strain>
    </source>
</reference>
<keyword id="KW-0067">ATP-binding</keyword>
<keyword id="KW-0315">Glutamine amidotransferase</keyword>
<keyword id="KW-0436">Ligase</keyword>
<keyword id="KW-0460">Magnesium</keyword>
<keyword id="KW-0479">Metal-binding</keyword>
<keyword id="KW-0547">Nucleotide-binding</keyword>
<keyword id="KW-0665">Pyrimidine biosynthesis</keyword>
<keyword id="KW-1185">Reference proteome</keyword>
<sequence>MSKYIVVTGGVVSSIGKGITSASIGRILRSYGVNVTAIKIDPYLNWDSGTLNPYQHGEVYVTDDGMECDLDLGHYERFLDVELSGKANITTGKVYSSVIEKERKGEYLGSCVQIIPHITDEIKLMIRNVAEKTKAEVVMVEVGGTVGDIESQPFIEAVRQLKNEEGHDNCMFVHVTYVPYLKAAKEFKTKPTQHSTKELRGLGINPDMIVCRSELSLDANLKEKIAHFCDVPIEAVINTPDAHSIYEVPLIMYSANVGSYILNRLNIDTATNKADLYEWSQIVEDLKIETPKVKIAVVGKYIELEDAYISIRESLKHAGAANKVHVDIDWIKADNDFNIDILKQYDGLLIPGGFGERGINGKIEAVKYAIKNNVPIFGICLGLHAMSIAIAQLNGYPDANSTEFDENSTCPVIDMMEEQKKINNMGGTMRLGAYPCKIKEGTLAYEAYKDTNISERHRHRYEVNNEYRDILTSAGAIISGTSPDDFLVEMIELENHPWFLGCQFHPEFKSRPNKAHPLFKSFIKAAKNKKQNQK</sequence>
<dbReference type="EC" id="6.3.4.2" evidence="1"/>
<dbReference type="EMBL" id="CP000102">
    <property type="protein sequence ID" value="ABC56853.1"/>
    <property type="molecule type" value="Genomic_DNA"/>
</dbReference>
<dbReference type="RefSeq" id="WP_011406053.1">
    <property type="nucleotide sequence ID" value="NC_007681.1"/>
</dbReference>
<dbReference type="SMR" id="Q2NH50"/>
<dbReference type="STRING" id="339860.Msp_0453"/>
<dbReference type="MEROPS" id="C26.964"/>
<dbReference type="KEGG" id="mst:Msp_0453"/>
<dbReference type="eggNOG" id="arCOG00063">
    <property type="taxonomic scope" value="Archaea"/>
</dbReference>
<dbReference type="HOGENOM" id="CLU_011675_5_0_2"/>
<dbReference type="OrthoDB" id="52769at2157"/>
<dbReference type="UniPathway" id="UPA00159">
    <property type="reaction ID" value="UER00277"/>
</dbReference>
<dbReference type="Proteomes" id="UP000001931">
    <property type="component" value="Chromosome"/>
</dbReference>
<dbReference type="GO" id="GO:0005829">
    <property type="term" value="C:cytosol"/>
    <property type="evidence" value="ECO:0007669"/>
    <property type="project" value="TreeGrafter"/>
</dbReference>
<dbReference type="GO" id="GO:0005524">
    <property type="term" value="F:ATP binding"/>
    <property type="evidence" value="ECO:0007669"/>
    <property type="project" value="UniProtKB-KW"/>
</dbReference>
<dbReference type="GO" id="GO:0003883">
    <property type="term" value="F:CTP synthase activity"/>
    <property type="evidence" value="ECO:0007669"/>
    <property type="project" value="UniProtKB-UniRule"/>
</dbReference>
<dbReference type="GO" id="GO:0004359">
    <property type="term" value="F:glutaminase activity"/>
    <property type="evidence" value="ECO:0007669"/>
    <property type="project" value="RHEA"/>
</dbReference>
<dbReference type="GO" id="GO:0042802">
    <property type="term" value="F:identical protein binding"/>
    <property type="evidence" value="ECO:0007669"/>
    <property type="project" value="TreeGrafter"/>
</dbReference>
<dbReference type="GO" id="GO:0046872">
    <property type="term" value="F:metal ion binding"/>
    <property type="evidence" value="ECO:0007669"/>
    <property type="project" value="UniProtKB-KW"/>
</dbReference>
<dbReference type="GO" id="GO:0044210">
    <property type="term" value="P:'de novo' CTP biosynthetic process"/>
    <property type="evidence" value="ECO:0007669"/>
    <property type="project" value="UniProtKB-UniRule"/>
</dbReference>
<dbReference type="GO" id="GO:0019856">
    <property type="term" value="P:pyrimidine nucleobase biosynthetic process"/>
    <property type="evidence" value="ECO:0007669"/>
    <property type="project" value="TreeGrafter"/>
</dbReference>
<dbReference type="CDD" id="cd03113">
    <property type="entry name" value="CTPS_N"/>
    <property type="match status" value="1"/>
</dbReference>
<dbReference type="CDD" id="cd01746">
    <property type="entry name" value="GATase1_CTP_Synthase"/>
    <property type="match status" value="1"/>
</dbReference>
<dbReference type="FunFam" id="3.40.50.300:FF:000009">
    <property type="entry name" value="CTP synthase"/>
    <property type="match status" value="1"/>
</dbReference>
<dbReference type="FunFam" id="3.40.50.880:FF:000002">
    <property type="entry name" value="CTP synthase"/>
    <property type="match status" value="1"/>
</dbReference>
<dbReference type="Gene3D" id="3.40.50.880">
    <property type="match status" value="1"/>
</dbReference>
<dbReference type="Gene3D" id="3.40.50.300">
    <property type="entry name" value="P-loop containing nucleotide triphosphate hydrolases"/>
    <property type="match status" value="1"/>
</dbReference>
<dbReference type="HAMAP" id="MF_01227">
    <property type="entry name" value="PyrG"/>
    <property type="match status" value="1"/>
</dbReference>
<dbReference type="InterPro" id="IPR029062">
    <property type="entry name" value="Class_I_gatase-like"/>
</dbReference>
<dbReference type="InterPro" id="IPR004468">
    <property type="entry name" value="CTP_synthase"/>
</dbReference>
<dbReference type="InterPro" id="IPR017456">
    <property type="entry name" value="CTP_synthase_N"/>
</dbReference>
<dbReference type="InterPro" id="IPR017926">
    <property type="entry name" value="GATASE"/>
</dbReference>
<dbReference type="InterPro" id="IPR033828">
    <property type="entry name" value="GATase1_CTP_Synthase"/>
</dbReference>
<dbReference type="InterPro" id="IPR027417">
    <property type="entry name" value="P-loop_NTPase"/>
</dbReference>
<dbReference type="NCBIfam" id="NF003792">
    <property type="entry name" value="PRK05380.1"/>
    <property type="match status" value="1"/>
</dbReference>
<dbReference type="NCBIfam" id="TIGR00337">
    <property type="entry name" value="PyrG"/>
    <property type="match status" value="1"/>
</dbReference>
<dbReference type="PANTHER" id="PTHR11550">
    <property type="entry name" value="CTP SYNTHASE"/>
    <property type="match status" value="1"/>
</dbReference>
<dbReference type="PANTHER" id="PTHR11550:SF0">
    <property type="entry name" value="CTP SYNTHASE-RELATED"/>
    <property type="match status" value="1"/>
</dbReference>
<dbReference type="Pfam" id="PF06418">
    <property type="entry name" value="CTP_synth_N"/>
    <property type="match status" value="1"/>
</dbReference>
<dbReference type="Pfam" id="PF00117">
    <property type="entry name" value="GATase"/>
    <property type="match status" value="1"/>
</dbReference>
<dbReference type="SUPFAM" id="SSF52317">
    <property type="entry name" value="Class I glutamine amidotransferase-like"/>
    <property type="match status" value="1"/>
</dbReference>
<dbReference type="SUPFAM" id="SSF52540">
    <property type="entry name" value="P-loop containing nucleoside triphosphate hydrolases"/>
    <property type="match status" value="1"/>
</dbReference>
<dbReference type="PROSITE" id="PS51273">
    <property type="entry name" value="GATASE_TYPE_1"/>
    <property type="match status" value="1"/>
</dbReference>
<gene>
    <name evidence="1" type="primary">pyrG</name>
    <name type="ordered locus">Msp_0453</name>
</gene>
<accession>Q2NH50</accession>
<organism>
    <name type="scientific">Methanosphaera stadtmanae (strain ATCC 43021 / DSM 3091 / JCM 11832 / MCB-3)</name>
    <dbReference type="NCBI Taxonomy" id="339860"/>
    <lineage>
        <taxon>Archaea</taxon>
        <taxon>Methanobacteriati</taxon>
        <taxon>Methanobacteriota</taxon>
        <taxon>Methanomada group</taxon>
        <taxon>Methanobacteria</taxon>
        <taxon>Methanobacteriales</taxon>
        <taxon>Methanobacteriaceae</taxon>
        <taxon>Methanosphaera</taxon>
    </lineage>
</organism>
<evidence type="ECO:0000255" key="1">
    <source>
        <dbReference type="HAMAP-Rule" id="MF_01227"/>
    </source>
</evidence>
<protein>
    <recommendedName>
        <fullName evidence="1">CTP synthase</fullName>
        <ecNumber evidence="1">6.3.4.2</ecNumber>
    </recommendedName>
    <alternativeName>
        <fullName evidence="1">Cytidine 5'-triphosphate synthase</fullName>
    </alternativeName>
    <alternativeName>
        <fullName evidence="1">Cytidine triphosphate synthetase</fullName>
        <shortName evidence="1">CTP synthetase</shortName>
        <shortName evidence="1">CTPS</shortName>
    </alternativeName>
    <alternativeName>
        <fullName evidence="1">UTP--ammonia ligase</fullName>
    </alternativeName>
</protein>
<comment type="function">
    <text evidence="1">Catalyzes the ATP-dependent amination of UTP to CTP with either L-glutamine or ammonia as the source of nitrogen. Regulates intracellular CTP levels through interactions with the four ribonucleotide triphosphates.</text>
</comment>
<comment type="catalytic activity">
    <reaction evidence="1">
        <text>UTP + L-glutamine + ATP + H2O = CTP + L-glutamate + ADP + phosphate + 2 H(+)</text>
        <dbReference type="Rhea" id="RHEA:26426"/>
        <dbReference type="ChEBI" id="CHEBI:15377"/>
        <dbReference type="ChEBI" id="CHEBI:15378"/>
        <dbReference type="ChEBI" id="CHEBI:29985"/>
        <dbReference type="ChEBI" id="CHEBI:30616"/>
        <dbReference type="ChEBI" id="CHEBI:37563"/>
        <dbReference type="ChEBI" id="CHEBI:43474"/>
        <dbReference type="ChEBI" id="CHEBI:46398"/>
        <dbReference type="ChEBI" id="CHEBI:58359"/>
        <dbReference type="ChEBI" id="CHEBI:456216"/>
        <dbReference type="EC" id="6.3.4.2"/>
    </reaction>
</comment>
<comment type="catalytic activity">
    <reaction evidence="1">
        <text>L-glutamine + H2O = L-glutamate + NH4(+)</text>
        <dbReference type="Rhea" id="RHEA:15889"/>
        <dbReference type="ChEBI" id="CHEBI:15377"/>
        <dbReference type="ChEBI" id="CHEBI:28938"/>
        <dbReference type="ChEBI" id="CHEBI:29985"/>
        <dbReference type="ChEBI" id="CHEBI:58359"/>
    </reaction>
</comment>
<comment type="catalytic activity">
    <reaction evidence="1">
        <text>UTP + NH4(+) + ATP = CTP + ADP + phosphate + 2 H(+)</text>
        <dbReference type="Rhea" id="RHEA:16597"/>
        <dbReference type="ChEBI" id="CHEBI:15378"/>
        <dbReference type="ChEBI" id="CHEBI:28938"/>
        <dbReference type="ChEBI" id="CHEBI:30616"/>
        <dbReference type="ChEBI" id="CHEBI:37563"/>
        <dbReference type="ChEBI" id="CHEBI:43474"/>
        <dbReference type="ChEBI" id="CHEBI:46398"/>
        <dbReference type="ChEBI" id="CHEBI:456216"/>
    </reaction>
</comment>
<comment type="activity regulation">
    <text evidence="1">Allosterically activated by GTP, when glutamine is the substrate; GTP has no effect on the reaction when ammonia is the substrate. The allosteric effector GTP functions by stabilizing the protein conformation that binds the tetrahedral intermediate(s) formed during glutamine hydrolysis. Inhibited by the product CTP, via allosteric rather than competitive inhibition.</text>
</comment>
<comment type="pathway">
    <text evidence="1">Pyrimidine metabolism; CTP biosynthesis via de novo pathway; CTP from UDP: step 2/2.</text>
</comment>
<comment type="subunit">
    <text evidence="1">Homotetramer.</text>
</comment>
<comment type="miscellaneous">
    <text evidence="1">CTPSs have evolved a hybrid strategy for distinguishing between UTP and CTP. The overlapping regions of the product feedback inhibitory and substrate sites recognize a common feature in both compounds, the triphosphate moiety. To differentiate isosteric substrate and product pyrimidine rings, an additional pocket far from the expected kinase/ligase catalytic site, specifically recognizes the cytosine and ribose portions of the product inhibitor.</text>
</comment>
<comment type="similarity">
    <text evidence="1">Belongs to the CTP synthase family.</text>
</comment>
<name>PYRG_METST</name>
<feature type="chain" id="PRO_0000266276" description="CTP synthase">
    <location>
        <begin position="1"/>
        <end position="534"/>
    </location>
</feature>
<feature type="domain" description="Glutamine amidotransferase type-1" evidence="1">
    <location>
        <begin position="294"/>
        <end position="532"/>
    </location>
</feature>
<feature type="region of interest" description="Amidoligase domain" evidence="1">
    <location>
        <begin position="1"/>
        <end position="267"/>
    </location>
</feature>
<feature type="active site" description="Nucleophile; for glutamine hydrolysis" evidence="1">
    <location>
        <position position="380"/>
    </location>
</feature>
<feature type="active site" evidence="1">
    <location>
        <position position="505"/>
    </location>
</feature>
<feature type="active site" evidence="1">
    <location>
        <position position="507"/>
    </location>
</feature>
<feature type="binding site" evidence="1">
    <location>
        <position position="13"/>
    </location>
    <ligand>
        <name>CTP</name>
        <dbReference type="ChEBI" id="CHEBI:37563"/>
        <note>allosteric inhibitor</note>
    </ligand>
</feature>
<feature type="binding site" evidence="1">
    <location>
        <position position="13"/>
    </location>
    <ligand>
        <name>UTP</name>
        <dbReference type="ChEBI" id="CHEBI:46398"/>
    </ligand>
</feature>
<feature type="binding site" evidence="1">
    <location>
        <begin position="14"/>
        <end position="19"/>
    </location>
    <ligand>
        <name>ATP</name>
        <dbReference type="ChEBI" id="CHEBI:30616"/>
    </ligand>
</feature>
<feature type="binding site" evidence="1">
    <location>
        <position position="54"/>
    </location>
    <ligand>
        <name>L-glutamine</name>
        <dbReference type="ChEBI" id="CHEBI:58359"/>
    </ligand>
</feature>
<feature type="binding site" evidence="1">
    <location>
        <position position="71"/>
    </location>
    <ligand>
        <name>ATP</name>
        <dbReference type="ChEBI" id="CHEBI:30616"/>
    </ligand>
</feature>
<feature type="binding site" evidence="1">
    <location>
        <position position="71"/>
    </location>
    <ligand>
        <name>Mg(2+)</name>
        <dbReference type="ChEBI" id="CHEBI:18420"/>
    </ligand>
</feature>
<feature type="binding site" evidence="1">
    <location>
        <position position="141"/>
    </location>
    <ligand>
        <name>Mg(2+)</name>
        <dbReference type="ChEBI" id="CHEBI:18420"/>
    </ligand>
</feature>
<feature type="binding site" evidence="1">
    <location>
        <begin position="148"/>
        <end position="150"/>
    </location>
    <ligand>
        <name>CTP</name>
        <dbReference type="ChEBI" id="CHEBI:37563"/>
        <note>allosteric inhibitor</note>
    </ligand>
</feature>
<feature type="binding site" evidence="1">
    <location>
        <begin position="188"/>
        <end position="193"/>
    </location>
    <ligand>
        <name>CTP</name>
        <dbReference type="ChEBI" id="CHEBI:37563"/>
        <note>allosteric inhibitor</note>
    </ligand>
</feature>
<feature type="binding site" evidence="1">
    <location>
        <begin position="188"/>
        <end position="193"/>
    </location>
    <ligand>
        <name>UTP</name>
        <dbReference type="ChEBI" id="CHEBI:46398"/>
    </ligand>
</feature>
<feature type="binding site" evidence="1">
    <location>
        <position position="224"/>
    </location>
    <ligand>
        <name>CTP</name>
        <dbReference type="ChEBI" id="CHEBI:37563"/>
        <note>allosteric inhibitor</note>
    </ligand>
</feature>
<feature type="binding site" evidence="1">
    <location>
        <position position="224"/>
    </location>
    <ligand>
        <name>UTP</name>
        <dbReference type="ChEBI" id="CHEBI:46398"/>
    </ligand>
</feature>
<feature type="binding site" evidence="1">
    <location>
        <position position="353"/>
    </location>
    <ligand>
        <name>L-glutamine</name>
        <dbReference type="ChEBI" id="CHEBI:58359"/>
    </ligand>
</feature>
<feature type="binding site" evidence="1">
    <location>
        <begin position="381"/>
        <end position="384"/>
    </location>
    <ligand>
        <name>L-glutamine</name>
        <dbReference type="ChEBI" id="CHEBI:58359"/>
    </ligand>
</feature>
<feature type="binding site" evidence="1">
    <location>
        <position position="403"/>
    </location>
    <ligand>
        <name>L-glutamine</name>
        <dbReference type="ChEBI" id="CHEBI:58359"/>
    </ligand>
</feature>
<feature type="binding site" evidence="1">
    <location>
        <position position="460"/>
    </location>
    <ligand>
        <name>L-glutamine</name>
        <dbReference type="ChEBI" id="CHEBI:58359"/>
    </ligand>
</feature>
<proteinExistence type="inferred from homology"/>